<sequence>MKLNKYIDHTLLKQDAKKKQIDSLLSEAREYDFASVCVNPTWVEHAKKGLEGTDAKVCTVVGFPLGATTSAVKAFETKEAIQNGADEIDMVINVGALKSGNLALVESDIRAVVEASGDKLVKVIIEACLLTDQEKIVVCQLAQKAGADFVKTSTGFSTGGATIADVRLMCETVGSDMGVKAAGGARSYADALAFVEAGATRIGTSAGVAILKGELADGDY</sequence>
<gene>
    <name evidence="1" type="primary">deoC</name>
    <name type="ordered locus">SPH_0942</name>
</gene>
<accession>B1IB13</accession>
<dbReference type="EC" id="4.1.2.4" evidence="1"/>
<dbReference type="EMBL" id="CP000936">
    <property type="protein sequence ID" value="ACA35906.1"/>
    <property type="molecule type" value="Genomic_DNA"/>
</dbReference>
<dbReference type="RefSeq" id="WP_000773666.1">
    <property type="nucleotide sequence ID" value="NC_010380.1"/>
</dbReference>
<dbReference type="SMR" id="B1IB13"/>
<dbReference type="KEGG" id="spv:SPH_0942"/>
<dbReference type="HOGENOM" id="CLU_053595_0_1_9"/>
<dbReference type="UniPathway" id="UPA00002">
    <property type="reaction ID" value="UER00468"/>
</dbReference>
<dbReference type="Proteomes" id="UP000002163">
    <property type="component" value="Chromosome"/>
</dbReference>
<dbReference type="GO" id="GO:0005737">
    <property type="term" value="C:cytoplasm"/>
    <property type="evidence" value="ECO:0007669"/>
    <property type="project" value="UniProtKB-SubCell"/>
</dbReference>
<dbReference type="GO" id="GO:0004139">
    <property type="term" value="F:deoxyribose-phosphate aldolase activity"/>
    <property type="evidence" value="ECO:0007669"/>
    <property type="project" value="UniProtKB-UniRule"/>
</dbReference>
<dbReference type="GO" id="GO:0006018">
    <property type="term" value="P:2-deoxyribose 1-phosphate catabolic process"/>
    <property type="evidence" value="ECO:0007669"/>
    <property type="project" value="UniProtKB-UniRule"/>
</dbReference>
<dbReference type="GO" id="GO:0016052">
    <property type="term" value="P:carbohydrate catabolic process"/>
    <property type="evidence" value="ECO:0007669"/>
    <property type="project" value="TreeGrafter"/>
</dbReference>
<dbReference type="GO" id="GO:0009264">
    <property type="term" value="P:deoxyribonucleotide catabolic process"/>
    <property type="evidence" value="ECO:0007669"/>
    <property type="project" value="InterPro"/>
</dbReference>
<dbReference type="CDD" id="cd00959">
    <property type="entry name" value="DeoC"/>
    <property type="match status" value="1"/>
</dbReference>
<dbReference type="FunFam" id="3.20.20.70:FF:000044">
    <property type="entry name" value="Deoxyribose-phosphate aldolase"/>
    <property type="match status" value="1"/>
</dbReference>
<dbReference type="Gene3D" id="3.20.20.70">
    <property type="entry name" value="Aldolase class I"/>
    <property type="match status" value="1"/>
</dbReference>
<dbReference type="HAMAP" id="MF_00114">
    <property type="entry name" value="DeoC_type1"/>
    <property type="match status" value="1"/>
</dbReference>
<dbReference type="InterPro" id="IPR013785">
    <property type="entry name" value="Aldolase_TIM"/>
</dbReference>
<dbReference type="InterPro" id="IPR011343">
    <property type="entry name" value="DeoC"/>
</dbReference>
<dbReference type="InterPro" id="IPR002915">
    <property type="entry name" value="DeoC/FbaB/LacD_aldolase"/>
</dbReference>
<dbReference type="InterPro" id="IPR028581">
    <property type="entry name" value="DeoC_typeI"/>
</dbReference>
<dbReference type="NCBIfam" id="TIGR00126">
    <property type="entry name" value="deoC"/>
    <property type="match status" value="1"/>
</dbReference>
<dbReference type="PANTHER" id="PTHR10889">
    <property type="entry name" value="DEOXYRIBOSE-PHOSPHATE ALDOLASE"/>
    <property type="match status" value="1"/>
</dbReference>
<dbReference type="PANTHER" id="PTHR10889:SF1">
    <property type="entry name" value="DEOXYRIBOSE-PHOSPHATE ALDOLASE"/>
    <property type="match status" value="1"/>
</dbReference>
<dbReference type="Pfam" id="PF01791">
    <property type="entry name" value="DeoC"/>
    <property type="match status" value="1"/>
</dbReference>
<dbReference type="PIRSF" id="PIRSF001357">
    <property type="entry name" value="DeoC"/>
    <property type="match status" value="1"/>
</dbReference>
<dbReference type="SMART" id="SM01133">
    <property type="entry name" value="DeoC"/>
    <property type="match status" value="1"/>
</dbReference>
<dbReference type="SUPFAM" id="SSF51569">
    <property type="entry name" value="Aldolase"/>
    <property type="match status" value="1"/>
</dbReference>
<proteinExistence type="inferred from homology"/>
<feature type="chain" id="PRO_1000094857" description="Deoxyribose-phosphate aldolase">
    <location>
        <begin position="1"/>
        <end position="220"/>
    </location>
</feature>
<feature type="active site" description="Proton donor/acceptor" evidence="1">
    <location>
        <position position="89"/>
    </location>
</feature>
<feature type="active site" description="Schiff-base intermediate with acetaldehyde" evidence="1">
    <location>
        <position position="151"/>
    </location>
</feature>
<feature type="active site" description="Proton donor/acceptor" evidence="1">
    <location>
        <position position="180"/>
    </location>
</feature>
<protein>
    <recommendedName>
        <fullName evidence="1">Deoxyribose-phosphate aldolase</fullName>
        <shortName evidence="1">DERA</shortName>
        <ecNumber evidence="1">4.1.2.4</ecNumber>
    </recommendedName>
    <alternativeName>
        <fullName evidence="1">2-deoxy-D-ribose 5-phosphate aldolase</fullName>
    </alternativeName>
    <alternativeName>
        <fullName evidence="1">Phosphodeoxyriboaldolase</fullName>
        <shortName evidence="1">Deoxyriboaldolase</shortName>
    </alternativeName>
</protein>
<evidence type="ECO:0000255" key="1">
    <source>
        <dbReference type="HAMAP-Rule" id="MF_00114"/>
    </source>
</evidence>
<keyword id="KW-0963">Cytoplasm</keyword>
<keyword id="KW-0456">Lyase</keyword>
<keyword id="KW-0704">Schiff base</keyword>
<comment type="function">
    <text evidence="1">Catalyzes a reversible aldol reaction between acetaldehyde and D-glyceraldehyde 3-phosphate to generate 2-deoxy-D-ribose 5-phosphate.</text>
</comment>
<comment type="catalytic activity">
    <reaction evidence="1">
        <text>2-deoxy-D-ribose 5-phosphate = D-glyceraldehyde 3-phosphate + acetaldehyde</text>
        <dbReference type="Rhea" id="RHEA:12821"/>
        <dbReference type="ChEBI" id="CHEBI:15343"/>
        <dbReference type="ChEBI" id="CHEBI:59776"/>
        <dbReference type="ChEBI" id="CHEBI:62877"/>
        <dbReference type="EC" id="4.1.2.4"/>
    </reaction>
</comment>
<comment type="pathway">
    <text evidence="1">Carbohydrate degradation; 2-deoxy-D-ribose 1-phosphate degradation; D-glyceraldehyde 3-phosphate and acetaldehyde from 2-deoxy-alpha-D-ribose 1-phosphate: step 2/2.</text>
</comment>
<comment type="subcellular location">
    <subcellularLocation>
        <location evidence="1">Cytoplasm</location>
    </subcellularLocation>
</comment>
<comment type="similarity">
    <text evidence="1">Belongs to the DeoC/FbaB aldolase family. DeoC type 1 subfamily.</text>
</comment>
<reference key="1">
    <citation type="journal article" date="2010" name="Genome Biol.">
        <title>Structure and dynamics of the pan-genome of Streptococcus pneumoniae and closely related species.</title>
        <authorList>
            <person name="Donati C."/>
            <person name="Hiller N.L."/>
            <person name="Tettelin H."/>
            <person name="Muzzi A."/>
            <person name="Croucher N.J."/>
            <person name="Angiuoli S.V."/>
            <person name="Oggioni M."/>
            <person name="Dunning Hotopp J.C."/>
            <person name="Hu F.Z."/>
            <person name="Riley D.R."/>
            <person name="Covacci A."/>
            <person name="Mitchell T.J."/>
            <person name="Bentley S.D."/>
            <person name="Kilian M."/>
            <person name="Ehrlich G.D."/>
            <person name="Rappuoli R."/>
            <person name="Moxon E.R."/>
            <person name="Masignani V."/>
        </authorList>
    </citation>
    <scope>NUCLEOTIDE SEQUENCE [LARGE SCALE GENOMIC DNA]</scope>
    <source>
        <strain>Hungary19A-6</strain>
    </source>
</reference>
<organism>
    <name type="scientific">Streptococcus pneumoniae (strain Hungary19A-6)</name>
    <dbReference type="NCBI Taxonomy" id="487214"/>
    <lineage>
        <taxon>Bacteria</taxon>
        <taxon>Bacillati</taxon>
        <taxon>Bacillota</taxon>
        <taxon>Bacilli</taxon>
        <taxon>Lactobacillales</taxon>
        <taxon>Streptococcaceae</taxon>
        <taxon>Streptococcus</taxon>
    </lineage>
</organism>
<name>DEOC_STRPI</name>